<reference key="1">
    <citation type="journal article" date="1994" name="J. Gen. Virol.">
        <title>Nucleotide sequence of a 55 kbp region from the right end of the genome of a pathogenic African swine fever virus isolate (Malawi LIL20/1).</title>
        <authorList>
            <person name="Dixon L.K."/>
            <person name="Twigg S.R.F."/>
            <person name="Baylis S.A."/>
            <person name="Vydelingum S."/>
            <person name="Bristow C."/>
            <person name="Hammond J.M."/>
            <person name="Smith G.L."/>
        </authorList>
    </citation>
    <scope>NUCLEOTIDE SEQUENCE [GENOMIC DNA]</scope>
</reference>
<reference key="2">
    <citation type="submission" date="2003-03" db="EMBL/GenBank/DDBJ databases">
        <title>African swine fever virus genomes.</title>
        <authorList>
            <person name="Kutish G.F."/>
            <person name="Rock D.L."/>
        </authorList>
    </citation>
    <scope>NUCLEOTIDE SEQUENCE [LARGE SCALE GENOMIC DNA]</scope>
</reference>
<feature type="chain" id="PRO_0000373145" description="NifS-like protein">
    <location>
        <begin position="1"/>
        <end position="376"/>
    </location>
</feature>
<feature type="binding site" evidence="1">
    <location>
        <begin position="58"/>
        <end position="59"/>
    </location>
    <ligand>
        <name>pyridoxal 5'-phosphate</name>
        <dbReference type="ChEBI" id="CHEBI:597326"/>
    </ligand>
</feature>
<feature type="binding site" evidence="1">
    <location>
        <begin position="184"/>
        <end position="186"/>
    </location>
    <ligand>
        <name>pyridoxal 5'-phosphate</name>
        <dbReference type="ChEBI" id="CHEBI:597326"/>
    </ligand>
</feature>
<organism>
    <name type="scientific">African swine fever virus (isolate Tick/Malawi/Lil 20-1/1983)</name>
    <name type="common">ASFV</name>
    <dbReference type="NCBI Taxonomy" id="10500"/>
    <lineage>
        <taxon>Viruses</taxon>
        <taxon>Varidnaviria</taxon>
        <taxon>Bamfordvirae</taxon>
        <taxon>Nucleocytoviricota</taxon>
        <taxon>Pokkesviricetes</taxon>
        <taxon>Asfuvirales</taxon>
        <taxon>Asfarviridae</taxon>
        <taxon>Asfivirus</taxon>
        <taxon>African swine fever virus</taxon>
    </lineage>
</organism>
<name>NIFSL_ASFM2</name>
<protein>
    <recommendedName>
        <fullName>NifS-like protein</fullName>
    </recommendedName>
</protein>
<proteinExistence type="inferred from homology"/>
<dbReference type="EMBL" id="X71982">
    <property type="protein sequence ID" value="CAA50830.1"/>
    <property type="molecule type" value="Genomic_DNA"/>
</dbReference>
<dbReference type="EMBL" id="AY261361">
    <property type="status" value="NOT_ANNOTATED_CDS"/>
    <property type="molecule type" value="Genomic_DNA"/>
</dbReference>
<dbReference type="SMR" id="Q65236"/>
<dbReference type="Proteomes" id="UP000000860">
    <property type="component" value="Segment"/>
</dbReference>
<dbReference type="GO" id="GO:0044423">
    <property type="term" value="C:virion component"/>
    <property type="evidence" value="ECO:0007669"/>
    <property type="project" value="UniProtKB-KW"/>
</dbReference>
<dbReference type="Gene3D" id="3.90.1150.10">
    <property type="entry name" value="Aspartate Aminotransferase, domain 1"/>
    <property type="match status" value="1"/>
</dbReference>
<dbReference type="Gene3D" id="3.40.640.10">
    <property type="entry name" value="Type I PLP-dependent aspartate aminotransferase-like (Major domain)"/>
    <property type="match status" value="1"/>
</dbReference>
<dbReference type="InterPro" id="IPR000192">
    <property type="entry name" value="Aminotrans_V_dom"/>
</dbReference>
<dbReference type="InterPro" id="IPR015424">
    <property type="entry name" value="PyrdxlP-dep_Trfase"/>
</dbReference>
<dbReference type="InterPro" id="IPR015421">
    <property type="entry name" value="PyrdxlP-dep_Trfase_major"/>
</dbReference>
<dbReference type="InterPro" id="IPR015422">
    <property type="entry name" value="PyrdxlP-dep_Trfase_small"/>
</dbReference>
<dbReference type="PANTHER" id="PTHR11601:SF34">
    <property type="entry name" value="CYSTEINE DESULFURASE"/>
    <property type="match status" value="1"/>
</dbReference>
<dbReference type="PANTHER" id="PTHR11601">
    <property type="entry name" value="CYSTEINE DESULFURYLASE FAMILY MEMBER"/>
    <property type="match status" value="1"/>
</dbReference>
<dbReference type="Pfam" id="PF00266">
    <property type="entry name" value="Aminotran_5"/>
    <property type="match status" value="1"/>
</dbReference>
<dbReference type="SUPFAM" id="SSF53383">
    <property type="entry name" value="PLP-dependent transferases"/>
    <property type="match status" value="1"/>
</dbReference>
<organismHost>
    <name type="scientific">Ornithodoros</name>
    <name type="common">relapsing fever ticks</name>
    <dbReference type="NCBI Taxonomy" id="6937"/>
</organismHost>
<organismHost>
    <name type="scientific">Phacochoerus aethiopicus</name>
    <name type="common">Warthog</name>
    <dbReference type="NCBI Taxonomy" id="85517"/>
</organismHost>
<organismHost>
    <name type="scientific">Phacochoerus africanus</name>
    <name type="common">Warthog</name>
    <dbReference type="NCBI Taxonomy" id="41426"/>
</organismHost>
<organismHost>
    <name type="scientific">Potamochoerus larvatus</name>
    <name type="common">Bushpig</name>
    <dbReference type="NCBI Taxonomy" id="273792"/>
</organismHost>
<organismHost>
    <name type="scientific">Sus scrofa</name>
    <name type="common">Pig</name>
    <dbReference type="NCBI Taxonomy" id="9823"/>
</organismHost>
<evidence type="ECO:0000250" key="1">
    <source>
        <dbReference type="UniProtKB" id="P0A6B9"/>
    </source>
</evidence>
<evidence type="ECO:0000250" key="2">
    <source>
        <dbReference type="UniProtKB" id="Q65192"/>
    </source>
</evidence>
<evidence type="ECO:0000305" key="3"/>
<keyword id="KW-0946">Virion</keyword>
<accession>Q65236</accession>
<comment type="cofactor">
    <cofactor evidence="1">
        <name>pyridoxal 5'-phosphate</name>
        <dbReference type="ChEBI" id="CHEBI:597326"/>
    </cofactor>
</comment>
<comment type="subcellular location">
    <subcellularLocation>
        <location evidence="2">Virion</location>
    </subcellularLocation>
</comment>
<comment type="induction">
    <text evidence="3">Expressed in the late phase of the viral replicative cycle.</text>
</comment>
<comment type="similarity">
    <text evidence="3">Belongs to the class-V pyridoxal-phosphate-dependent aminotransferase family. NifS/IscS subfamily.</text>
</comment>
<comment type="caution">
    <text evidence="3">Although related to the NifS/IscS subfamily, lacks the conserved active site, suggesting it has no transferase activity.</text>
</comment>
<gene>
    <name type="ordered locus">Mal-132</name>
    <name type="ORF">j11R</name>
</gene>
<sequence length="376" mass="41805">MASILALDGLYAEVPKFLPEALREGCAGKKPLSFYIQQILNLMGCDGDEYHVLFTSSSEEANTHMITAAVRRHLLRTRQRPHVIIGAAEPPSVTECVKALAREKRCVYTIIPLKNFEIDPVAVYDAIQSNTCLACISGTNAVVKTFNKLQDISNVLRGIPLHSEVSDLVYQGCIQQNPPADSFSLNSLYGFLGVGVLGMKKKVMQDLGPLIFGGGLRGGSPNIPGIHAMYRTLIQQRPSIKKINTIHKLFIKTLKKHQHVYLPGLSIEDVPSNGMPVEVPKGLPGYILFSVGHSAEELQKKIFTKFNVKVGRIVNLQEMLFRIKIPQKYWETLLFIQLRDVLTKEDIKRVMVVLMYLDTITPRGSLPPPSHSSSFS</sequence>